<sequence>MSVPDATVVKAFLLDLQNRICAGLEQLDGQASFAADSWTRTEGGGGTSRVLTQGAVFEQAGVNFSHVTGAAMPASATAHRPELAGRSFEAMGVSLVIHPKNPYIPTTHANVRFFIAHKDGADPVWWFGGGFDLTPYYPFEEDVREWHQTAKNLCLPFGDDVYPKYKKWCDEYFFLPHRNETRGVGGLFFDDLNQAGFDKSFDFMQAVGNGFLTAYAPIVERRKETPYGERERDFQLYRRGRYVEFNLVYDRGTLFGLQTGGRTESILMSMPPLVRWQYAYTPEAGSPEAELYDNYLKPRDWV</sequence>
<keyword id="KW-0963">Cytoplasm</keyword>
<keyword id="KW-0350">Heme biosynthesis</keyword>
<keyword id="KW-0479">Metal-binding</keyword>
<keyword id="KW-0560">Oxidoreductase</keyword>
<keyword id="KW-0627">Porphyrin biosynthesis</keyword>
<comment type="function">
    <text evidence="1">Involved in the heme biosynthesis. Catalyzes the aerobic oxidative decarboxylation of propionate groups of rings A and B of coproporphyrinogen-III to yield the vinyl groups in protoporphyrinogen-IX.</text>
</comment>
<comment type="catalytic activity">
    <reaction evidence="1">
        <text>coproporphyrinogen III + O2 + 2 H(+) = protoporphyrinogen IX + 2 CO2 + 2 H2O</text>
        <dbReference type="Rhea" id="RHEA:18257"/>
        <dbReference type="ChEBI" id="CHEBI:15377"/>
        <dbReference type="ChEBI" id="CHEBI:15378"/>
        <dbReference type="ChEBI" id="CHEBI:15379"/>
        <dbReference type="ChEBI" id="CHEBI:16526"/>
        <dbReference type="ChEBI" id="CHEBI:57307"/>
        <dbReference type="ChEBI" id="CHEBI:57309"/>
        <dbReference type="EC" id="1.3.3.3"/>
    </reaction>
</comment>
<comment type="cofactor">
    <cofactor evidence="1">
        <name>a divalent metal cation</name>
        <dbReference type="ChEBI" id="CHEBI:60240"/>
    </cofactor>
</comment>
<comment type="pathway">
    <text evidence="1">Porphyrin-containing compound metabolism; protoporphyrin-IX biosynthesis; protoporphyrinogen-IX from coproporphyrinogen-III (O2 route): step 1/1.</text>
</comment>
<comment type="subunit">
    <text evidence="1">Homodimer.</text>
</comment>
<comment type="subcellular location">
    <subcellularLocation>
        <location evidence="1">Cytoplasm</location>
    </subcellularLocation>
</comment>
<comment type="similarity">
    <text evidence="1">Belongs to the aerobic coproporphyrinogen-III oxidase family.</text>
</comment>
<gene>
    <name evidence="1" type="primary">hemF</name>
    <name type="ordered locus">Shewana3_0041</name>
</gene>
<organism>
    <name type="scientific">Shewanella sp. (strain ANA-3)</name>
    <dbReference type="NCBI Taxonomy" id="94122"/>
    <lineage>
        <taxon>Bacteria</taxon>
        <taxon>Pseudomonadati</taxon>
        <taxon>Pseudomonadota</taxon>
        <taxon>Gammaproteobacteria</taxon>
        <taxon>Alteromonadales</taxon>
        <taxon>Shewanellaceae</taxon>
        <taxon>Shewanella</taxon>
    </lineage>
</organism>
<dbReference type="EC" id="1.3.3.3" evidence="1"/>
<dbReference type="EMBL" id="CP000469">
    <property type="protein sequence ID" value="ABK46286.1"/>
    <property type="molecule type" value="Genomic_DNA"/>
</dbReference>
<dbReference type="RefSeq" id="WP_011715331.1">
    <property type="nucleotide sequence ID" value="NC_008577.1"/>
</dbReference>
<dbReference type="SMR" id="A0KR67"/>
<dbReference type="STRING" id="94122.Shewana3_0041"/>
<dbReference type="KEGG" id="shn:Shewana3_0041"/>
<dbReference type="eggNOG" id="COG0408">
    <property type="taxonomic scope" value="Bacteria"/>
</dbReference>
<dbReference type="HOGENOM" id="CLU_026169_0_1_6"/>
<dbReference type="OrthoDB" id="9777553at2"/>
<dbReference type="UniPathway" id="UPA00251">
    <property type="reaction ID" value="UER00322"/>
</dbReference>
<dbReference type="Proteomes" id="UP000002589">
    <property type="component" value="Chromosome"/>
</dbReference>
<dbReference type="GO" id="GO:0005737">
    <property type="term" value="C:cytoplasm"/>
    <property type="evidence" value="ECO:0007669"/>
    <property type="project" value="UniProtKB-SubCell"/>
</dbReference>
<dbReference type="GO" id="GO:0004109">
    <property type="term" value="F:coproporphyrinogen oxidase activity"/>
    <property type="evidence" value="ECO:0007669"/>
    <property type="project" value="UniProtKB-UniRule"/>
</dbReference>
<dbReference type="GO" id="GO:0046872">
    <property type="term" value="F:metal ion binding"/>
    <property type="evidence" value="ECO:0007669"/>
    <property type="project" value="UniProtKB-KW"/>
</dbReference>
<dbReference type="GO" id="GO:0042803">
    <property type="term" value="F:protein homodimerization activity"/>
    <property type="evidence" value="ECO:0000250"/>
    <property type="project" value="UniProtKB"/>
</dbReference>
<dbReference type="GO" id="GO:0006782">
    <property type="term" value="P:protoporphyrinogen IX biosynthetic process"/>
    <property type="evidence" value="ECO:0007669"/>
    <property type="project" value="UniProtKB-UniRule"/>
</dbReference>
<dbReference type="FunFam" id="3.40.1500.10:FF:000001">
    <property type="entry name" value="Oxygen-dependent coproporphyrinogen-III oxidase"/>
    <property type="match status" value="1"/>
</dbReference>
<dbReference type="Gene3D" id="3.40.1500.10">
    <property type="entry name" value="Coproporphyrinogen III oxidase, aerobic"/>
    <property type="match status" value="1"/>
</dbReference>
<dbReference type="HAMAP" id="MF_00333">
    <property type="entry name" value="Coprogen_oxidas"/>
    <property type="match status" value="1"/>
</dbReference>
<dbReference type="InterPro" id="IPR001260">
    <property type="entry name" value="Coprogen_oxidase_aer"/>
</dbReference>
<dbReference type="InterPro" id="IPR036406">
    <property type="entry name" value="Coprogen_oxidase_aer_sf"/>
</dbReference>
<dbReference type="InterPro" id="IPR018375">
    <property type="entry name" value="Coprogen_oxidase_CS"/>
</dbReference>
<dbReference type="NCBIfam" id="NF003727">
    <property type="entry name" value="PRK05330.1"/>
    <property type="match status" value="1"/>
</dbReference>
<dbReference type="PANTHER" id="PTHR10755">
    <property type="entry name" value="COPROPORPHYRINOGEN III OXIDASE, MITOCHONDRIAL"/>
    <property type="match status" value="1"/>
</dbReference>
<dbReference type="PANTHER" id="PTHR10755:SF0">
    <property type="entry name" value="OXYGEN-DEPENDENT COPROPORPHYRINOGEN-III OXIDASE, MITOCHONDRIAL"/>
    <property type="match status" value="1"/>
</dbReference>
<dbReference type="Pfam" id="PF01218">
    <property type="entry name" value="Coprogen_oxidas"/>
    <property type="match status" value="1"/>
</dbReference>
<dbReference type="PIRSF" id="PIRSF000166">
    <property type="entry name" value="Coproporphyri_ox"/>
    <property type="match status" value="1"/>
</dbReference>
<dbReference type="PRINTS" id="PR00073">
    <property type="entry name" value="COPRGNOXDASE"/>
</dbReference>
<dbReference type="SUPFAM" id="SSF102886">
    <property type="entry name" value="Coproporphyrinogen III oxidase"/>
    <property type="match status" value="1"/>
</dbReference>
<dbReference type="PROSITE" id="PS01021">
    <property type="entry name" value="COPROGEN_OXIDASE"/>
    <property type="match status" value="1"/>
</dbReference>
<feature type="chain" id="PRO_1000019501" description="Oxygen-dependent coproporphyrinogen-III oxidase">
    <location>
        <begin position="1"/>
        <end position="302"/>
    </location>
</feature>
<feature type="region of interest" description="Important for dimerization" evidence="1">
    <location>
        <begin position="242"/>
        <end position="277"/>
    </location>
</feature>
<feature type="active site" description="Proton donor" evidence="1">
    <location>
        <position position="108"/>
    </location>
</feature>
<feature type="binding site" evidence="1">
    <location>
        <position position="94"/>
    </location>
    <ligand>
        <name>substrate</name>
    </ligand>
</feature>
<feature type="binding site" evidence="1">
    <location>
        <position position="98"/>
    </location>
    <ligand>
        <name>a divalent metal cation</name>
        <dbReference type="ChEBI" id="CHEBI:60240"/>
    </ligand>
</feature>
<feature type="binding site" evidence="1">
    <location>
        <position position="108"/>
    </location>
    <ligand>
        <name>a divalent metal cation</name>
        <dbReference type="ChEBI" id="CHEBI:60240"/>
    </ligand>
</feature>
<feature type="binding site" evidence="1">
    <location>
        <begin position="110"/>
        <end position="112"/>
    </location>
    <ligand>
        <name>substrate</name>
    </ligand>
</feature>
<feature type="binding site" evidence="1">
    <location>
        <position position="147"/>
    </location>
    <ligand>
        <name>a divalent metal cation</name>
        <dbReference type="ChEBI" id="CHEBI:60240"/>
    </ligand>
</feature>
<feature type="binding site" evidence="1">
    <location>
        <position position="177"/>
    </location>
    <ligand>
        <name>a divalent metal cation</name>
        <dbReference type="ChEBI" id="CHEBI:60240"/>
    </ligand>
</feature>
<feature type="binding site" evidence="1">
    <location>
        <begin position="260"/>
        <end position="262"/>
    </location>
    <ligand>
        <name>substrate</name>
    </ligand>
</feature>
<feature type="site" description="Important for dimerization" evidence="1">
    <location>
        <position position="177"/>
    </location>
</feature>
<accession>A0KR67</accession>
<reference key="1">
    <citation type="submission" date="2006-09" db="EMBL/GenBank/DDBJ databases">
        <title>Complete sequence of chromosome 1 of Shewanella sp. ANA-3.</title>
        <authorList>
            <person name="Copeland A."/>
            <person name="Lucas S."/>
            <person name="Lapidus A."/>
            <person name="Barry K."/>
            <person name="Detter J.C."/>
            <person name="Glavina del Rio T."/>
            <person name="Hammon N."/>
            <person name="Israni S."/>
            <person name="Dalin E."/>
            <person name="Tice H."/>
            <person name="Pitluck S."/>
            <person name="Chertkov O."/>
            <person name="Brettin T."/>
            <person name="Bruce D."/>
            <person name="Han C."/>
            <person name="Tapia R."/>
            <person name="Gilna P."/>
            <person name="Schmutz J."/>
            <person name="Larimer F."/>
            <person name="Land M."/>
            <person name="Hauser L."/>
            <person name="Kyrpides N."/>
            <person name="Kim E."/>
            <person name="Newman D."/>
            <person name="Salticov C."/>
            <person name="Konstantinidis K."/>
            <person name="Klappenback J."/>
            <person name="Tiedje J."/>
            <person name="Richardson P."/>
        </authorList>
    </citation>
    <scope>NUCLEOTIDE SEQUENCE [LARGE SCALE GENOMIC DNA]</scope>
    <source>
        <strain>ANA-3</strain>
    </source>
</reference>
<evidence type="ECO:0000255" key="1">
    <source>
        <dbReference type="HAMAP-Rule" id="MF_00333"/>
    </source>
</evidence>
<proteinExistence type="inferred from homology"/>
<protein>
    <recommendedName>
        <fullName evidence="1">Oxygen-dependent coproporphyrinogen-III oxidase</fullName>
        <shortName evidence="1">CPO</shortName>
        <shortName evidence="1">Coprogen oxidase</shortName>
        <shortName evidence="1">Coproporphyrinogenase</shortName>
        <ecNumber evidence="1">1.3.3.3</ecNumber>
    </recommendedName>
</protein>
<name>HEM6_SHESA</name>